<accession>A3NED2</accession>
<comment type="function">
    <text evidence="1">Catalyzes the conversion of 3-deoxy-D-arabino-heptulosonate 7-phosphate (DAHP) to dehydroquinate (DHQ).</text>
</comment>
<comment type="catalytic activity">
    <reaction evidence="1">
        <text>7-phospho-2-dehydro-3-deoxy-D-arabino-heptonate = 3-dehydroquinate + phosphate</text>
        <dbReference type="Rhea" id="RHEA:21968"/>
        <dbReference type="ChEBI" id="CHEBI:32364"/>
        <dbReference type="ChEBI" id="CHEBI:43474"/>
        <dbReference type="ChEBI" id="CHEBI:58394"/>
        <dbReference type="EC" id="4.2.3.4"/>
    </reaction>
</comment>
<comment type="cofactor">
    <cofactor evidence="1">
        <name>Co(2+)</name>
        <dbReference type="ChEBI" id="CHEBI:48828"/>
    </cofactor>
    <cofactor evidence="1">
        <name>Zn(2+)</name>
        <dbReference type="ChEBI" id="CHEBI:29105"/>
    </cofactor>
    <text evidence="1">Binds 1 divalent metal cation per subunit. Can use either Co(2+) or Zn(2+).</text>
</comment>
<comment type="cofactor">
    <cofactor evidence="1">
        <name>NAD(+)</name>
        <dbReference type="ChEBI" id="CHEBI:57540"/>
    </cofactor>
</comment>
<comment type="pathway">
    <text evidence="1">Metabolic intermediate biosynthesis; chorismate biosynthesis; chorismate from D-erythrose 4-phosphate and phosphoenolpyruvate: step 2/7.</text>
</comment>
<comment type="subcellular location">
    <subcellularLocation>
        <location evidence="1">Cytoplasm</location>
    </subcellularLocation>
</comment>
<comment type="similarity">
    <text evidence="1">Belongs to the sugar phosphate cyclases superfamily. Dehydroquinate synthase family.</text>
</comment>
<reference key="1">
    <citation type="journal article" date="2010" name="Genome Biol. Evol.">
        <title>Continuing evolution of Burkholderia mallei through genome reduction and large-scale rearrangements.</title>
        <authorList>
            <person name="Losada L."/>
            <person name="Ronning C.M."/>
            <person name="DeShazer D."/>
            <person name="Woods D."/>
            <person name="Fedorova N."/>
            <person name="Kim H.S."/>
            <person name="Shabalina S.A."/>
            <person name="Pearson T.R."/>
            <person name="Brinkac L."/>
            <person name="Tan P."/>
            <person name="Nandi T."/>
            <person name="Crabtree J."/>
            <person name="Badger J."/>
            <person name="Beckstrom-Sternberg S."/>
            <person name="Saqib M."/>
            <person name="Schutzer S.E."/>
            <person name="Keim P."/>
            <person name="Nierman W.C."/>
        </authorList>
    </citation>
    <scope>NUCLEOTIDE SEQUENCE [LARGE SCALE GENOMIC DNA]</scope>
    <source>
        <strain>668</strain>
    </source>
</reference>
<name>AROB_BURP6</name>
<dbReference type="EC" id="4.2.3.4" evidence="1"/>
<dbReference type="EMBL" id="CP000570">
    <property type="protein sequence ID" value="ABN84390.1"/>
    <property type="molecule type" value="Genomic_DNA"/>
</dbReference>
<dbReference type="RefSeq" id="WP_004196751.1">
    <property type="nucleotide sequence ID" value="NC_009074.1"/>
</dbReference>
<dbReference type="SMR" id="A3NED2"/>
<dbReference type="GeneID" id="92980425"/>
<dbReference type="KEGG" id="bpd:BURPS668_3699"/>
<dbReference type="HOGENOM" id="CLU_001201_0_2_4"/>
<dbReference type="UniPathway" id="UPA00053">
    <property type="reaction ID" value="UER00085"/>
</dbReference>
<dbReference type="GO" id="GO:0005737">
    <property type="term" value="C:cytoplasm"/>
    <property type="evidence" value="ECO:0007669"/>
    <property type="project" value="UniProtKB-SubCell"/>
</dbReference>
<dbReference type="GO" id="GO:0003856">
    <property type="term" value="F:3-dehydroquinate synthase activity"/>
    <property type="evidence" value="ECO:0007669"/>
    <property type="project" value="UniProtKB-UniRule"/>
</dbReference>
<dbReference type="GO" id="GO:0046872">
    <property type="term" value="F:metal ion binding"/>
    <property type="evidence" value="ECO:0007669"/>
    <property type="project" value="UniProtKB-KW"/>
</dbReference>
<dbReference type="GO" id="GO:0000166">
    <property type="term" value="F:nucleotide binding"/>
    <property type="evidence" value="ECO:0007669"/>
    <property type="project" value="UniProtKB-KW"/>
</dbReference>
<dbReference type="GO" id="GO:0008652">
    <property type="term" value="P:amino acid biosynthetic process"/>
    <property type="evidence" value="ECO:0007669"/>
    <property type="project" value="UniProtKB-KW"/>
</dbReference>
<dbReference type="GO" id="GO:0009073">
    <property type="term" value="P:aromatic amino acid family biosynthetic process"/>
    <property type="evidence" value="ECO:0007669"/>
    <property type="project" value="UniProtKB-KW"/>
</dbReference>
<dbReference type="GO" id="GO:0009423">
    <property type="term" value="P:chorismate biosynthetic process"/>
    <property type="evidence" value="ECO:0007669"/>
    <property type="project" value="UniProtKB-UniRule"/>
</dbReference>
<dbReference type="CDD" id="cd08195">
    <property type="entry name" value="DHQS"/>
    <property type="match status" value="1"/>
</dbReference>
<dbReference type="FunFam" id="3.40.50.1970:FF:000001">
    <property type="entry name" value="3-dehydroquinate synthase"/>
    <property type="match status" value="1"/>
</dbReference>
<dbReference type="Gene3D" id="3.40.50.1970">
    <property type="match status" value="1"/>
</dbReference>
<dbReference type="Gene3D" id="1.20.1090.10">
    <property type="entry name" value="Dehydroquinate synthase-like - alpha domain"/>
    <property type="match status" value="1"/>
</dbReference>
<dbReference type="HAMAP" id="MF_00110">
    <property type="entry name" value="DHQ_synthase"/>
    <property type="match status" value="1"/>
</dbReference>
<dbReference type="InterPro" id="IPR050071">
    <property type="entry name" value="Dehydroquinate_synthase"/>
</dbReference>
<dbReference type="InterPro" id="IPR016037">
    <property type="entry name" value="DHQ_synth_AroB"/>
</dbReference>
<dbReference type="InterPro" id="IPR030963">
    <property type="entry name" value="DHQ_synth_fam"/>
</dbReference>
<dbReference type="InterPro" id="IPR030960">
    <property type="entry name" value="DHQS/DOIS_N"/>
</dbReference>
<dbReference type="InterPro" id="IPR056179">
    <property type="entry name" value="DHQS_C"/>
</dbReference>
<dbReference type="NCBIfam" id="TIGR01357">
    <property type="entry name" value="aroB"/>
    <property type="match status" value="1"/>
</dbReference>
<dbReference type="PANTHER" id="PTHR43622">
    <property type="entry name" value="3-DEHYDROQUINATE SYNTHASE"/>
    <property type="match status" value="1"/>
</dbReference>
<dbReference type="PANTHER" id="PTHR43622:SF7">
    <property type="entry name" value="3-DEHYDROQUINATE SYNTHASE, CHLOROPLASTIC"/>
    <property type="match status" value="1"/>
</dbReference>
<dbReference type="Pfam" id="PF01761">
    <property type="entry name" value="DHQ_synthase"/>
    <property type="match status" value="1"/>
</dbReference>
<dbReference type="Pfam" id="PF24621">
    <property type="entry name" value="DHQS_C"/>
    <property type="match status" value="1"/>
</dbReference>
<dbReference type="PIRSF" id="PIRSF001455">
    <property type="entry name" value="DHQ_synth"/>
    <property type="match status" value="1"/>
</dbReference>
<dbReference type="SUPFAM" id="SSF56796">
    <property type="entry name" value="Dehydroquinate synthase-like"/>
    <property type="match status" value="1"/>
</dbReference>
<proteinExistence type="inferred from homology"/>
<sequence>MITVNVDLGERAYPIHIGADLIGRTELFAPHIAGASVTIVTNTTVEPLYGDTLRAALAPLGKRVSTVVLPDGEAYKNWETLNLIFDGLLEQHADRKTTLIALGGGVIGDMTGFAAACYMRGVPFIQVPTTLLSQVDSSVGGKTGINHPLGKNMIGAFYQPQAVIADIGALSTLPDRELAAGVAEIVKTGAIADAAFFDWIEANVGALTRRDPDALAHAVKRSCEIKAGVVAADEREGGLRAILNFGHTFGHAIEAGLGYGEWLHGEAVGCGMVMAADLSVRTGHLDEASRARLCRVVEAAHLPTRAPDLGDARYVELMRVDKKAEAGAIKFILLKRFGETIITPAPDDAVLATLAATTR</sequence>
<evidence type="ECO:0000255" key="1">
    <source>
        <dbReference type="HAMAP-Rule" id="MF_00110"/>
    </source>
</evidence>
<gene>
    <name evidence="1" type="primary">aroB</name>
    <name type="ordered locus">BURPS668_3699</name>
</gene>
<keyword id="KW-0028">Amino-acid biosynthesis</keyword>
<keyword id="KW-0057">Aromatic amino acid biosynthesis</keyword>
<keyword id="KW-0170">Cobalt</keyword>
<keyword id="KW-0963">Cytoplasm</keyword>
<keyword id="KW-0456">Lyase</keyword>
<keyword id="KW-0479">Metal-binding</keyword>
<keyword id="KW-0520">NAD</keyword>
<keyword id="KW-0547">Nucleotide-binding</keyword>
<keyword id="KW-0862">Zinc</keyword>
<feature type="chain" id="PRO_1000094479" description="3-dehydroquinate synthase">
    <location>
        <begin position="1"/>
        <end position="359"/>
    </location>
</feature>
<feature type="binding site" evidence="1">
    <location>
        <begin position="71"/>
        <end position="76"/>
    </location>
    <ligand>
        <name>NAD(+)</name>
        <dbReference type="ChEBI" id="CHEBI:57540"/>
    </ligand>
</feature>
<feature type="binding site" evidence="1">
    <location>
        <begin position="105"/>
        <end position="109"/>
    </location>
    <ligand>
        <name>NAD(+)</name>
        <dbReference type="ChEBI" id="CHEBI:57540"/>
    </ligand>
</feature>
<feature type="binding site" evidence="1">
    <location>
        <begin position="129"/>
        <end position="130"/>
    </location>
    <ligand>
        <name>NAD(+)</name>
        <dbReference type="ChEBI" id="CHEBI:57540"/>
    </ligand>
</feature>
<feature type="binding site" evidence="1">
    <location>
        <position position="142"/>
    </location>
    <ligand>
        <name>NAD(+)</name>
        <dbReference type="ChEBI" id="CHEBI:57540"/>
    </ligand>
</feature>
<feature type="binding site" evidence="1">
    <location>
        <position position="151"/>
    </location>
    <ligand>
        <name>NAD(+)</name>
        <dbReference type="ChEBI" id="CHEBI:57540"/>
    </ligand>
</feature>
<feature type="binding site" evidence="1">
    <location>
        <position position="184"/>
    </location>
    <ligand>
        <name>Zn(2+)</name>
        <dbReference type="ChEBI" id="CHEBI:29105"/>
    </ligand>
</feature>
<feature type="binding site" evidence="1">
    <location>
        <position position="247"/>
    </location>
    <ligand>
        <name>Zn(2+)</name>
        <dbReference type="ChEBI" id="CHEBI:29105"/>
    </ligand>
</feature>
<feature type="binding site" evidence="1">
    <location>
        <position position="264"/>
    </location>
    <ligand>
        <name>Zn(2+)</name>
        <dbReference type="ChEBI" id="CHEBI:29105"/>
    </ligand>
</feature>
<protein>
    <recommendedName>
        <fullName evidence="1">3-dehydroquinate synthase</fullName>
        <shortName evidence="1">DHQS</shortName>
        <ecNumber evidence="1">4.2.3.4</ecNumber>
    </recommendedName>
</protein>
<organism>
    <name type="scientific">Burkholderia pseudomallei (strain 668)</name>
    <dbReference type="NCBI Taxonomy" id="320373"/>
    <lineage>
        <taxon>Bacteria</taxon>
        <taxon>Pseudomonadati</taxon>
        <taxon>Pseudomonadota</taxon>
        <taxon>Betaproteobacteria</taxon>
        <taxon>Burkholderiales</taxon>
        <taxon>Burkholderiaceae</taxon>
        <taxon>Burkholderia</taxon>
        <taxon>pseudomallei group</taxon>
    </lineage>
</organism>